<organism>
    <name type="scientific">Pseudomonas aeruginosa (strain ATCC 15692 / DSM 22644 / CIP 104116 / JCM 14847 / LMG 12228 / 1C / PRS 101 / PAO1)</name>
    <dbReference type="NCBI Taxonomy" id="208964"/>
    <lineage>
        <taxon>Bacteria</taxon>
        <taxon>Pseudomonadati</taxon>
        <taxon>Pseudomonadota</taxon>
        <taxon>Gammaproteobacteria</taxon>
        <taxon>Pseudomonadales</taxon>
        <taxon>Pseudomonadaceae</taxon>
        <taxon>Pseudomonas</taxon>
    </lineage>
</organism>
<evidence type="ECO:0000269" key="1">
    <source>
    </source>
</evidence>
<evidence type="ECO:0000305" key="2"/>
<evidence type="ECO:0007829" key="3">
    <source>
        <dbReference type="PDB" id="3KBR"/>
    </source>
</evidence>
<evidence type="ECO:0007829" key="4">
    <source>
        <dbReference type="PDB" id="5HPQ"/>
    </source>
</evidence>
<name>PHEC_PSEAE</name>
<gene>
    <name type="primary">pheC</name>
    <name type="ordered locus">PA3475</name>
</gene>
<comment type="function">
    <text>Forms alternative pathway for phenylalanine biosynthesis. Can catalyze two reactions: prephenate dehydratase and arogenate dehydratase. May have a role in chemotaxis or transport.</text>
</comment>
<comment type="catalytic activity">
    <reaction>
        <text>prephenate + H(+) = 3-phenylpyruvate + CO2 + H2O</text>
        <dbReference type="Rhea" id="RHEA:21648"/>
        <dbReference type="ChEBI" id="CHEBI:15377"/>
        <dbReference type="ChEBI" id="CHEBI:15378"/>
        <dbReference type="ChEBI" id="CHEBI:16526"/>
        <dbReference type="ChEBI" id="CHEBI:18005"/>
        <dbReference type="ChEBI" id="CHEBI:29934"/>
        <dbReference type="EC" id="4.2.1.51"/>
    </reaction>
</comment>
<comment type="catalytic activity">
    <reaction>
        <text>L-arogenate + H(+) = L-phenylalanine + CO2 + H2O</text>
        <dbReference type="Rhea" id="RHEA:12536"/>
        <dbReference type="ChEBI" id="CHEBI:15377"/>
        <dbReference type="ChEBI" id="CHEBI:15378"/>
        <dbReference type="ChEBI" id="CHEBI:16526"/>
        <dbReference type="ChEBI" id="CHEBI:58095"/>
        <dbReference type="ChEBI" id="CHEBI:58180"/>
        <dbReference type="EC" id="4.2.1.91"/>
    </reaction>
</comment>
<comment type="pathway">
    <text>Amino-acid biosynthesis; L-phenylalanine biosynthesis; L-phenylalanine from L-arogenate: step 1/1.</text>
</comment>
<comment type="pathway">
    <text>Amino-acid biosynthesis; L-phenylalanine biosynthesis; phenylpyruvate from prephenate: step 1/1.</text>
</comment>
<comment type="subunit">
    <text evidence="2">Homodimer.</text>
</comment>
<comment type="subcellular location">
    <subcellularLocation>
        <location evidence="1">Periplasm</location>
    </subcellularLocation>
</comment>
<comment type="similarity">
    <text evidence="2">Belongs to the bacterial solute-binding protein 3 family.</text>
</comment>
<protein>
    <recommendedName>
        <fullName>Cyclohexadienyl dehydratase</fullName>
    </recommendedName>
    <domain>
        <recommendedName>
            <fullName>Prephenate dehydratase</fullName>
            <ecNumber>4.2.1.51</ecNumber>
        </recommendedName>
    </domain>
    <domain>
        <recommendedName>
            <fullName>Arogenate dehydratase</fullName>
            <ecNumber>4.2.1.91</ecNumber>
        </recommendedName>
    </domain>
</protein>
<keyword id="KW-0002">3D-structure</keyword>
<keyword id="KW-0028">Amino-acid biosynthesis</keyword>
<keyword id="KW-0057">Aromatic amino acid biosynthesis</keyword>
<keyword id="KW-0903">Direct protein sequencing</keyword>
<keyword id="KW-0456">Lyase</keyword>
<keyword id="KW-0511">Multifunctional enzyme</keyword>
<keyword id="KW-0574">Periplasm</keyword>
<keyword id="KW-0584">Phenylalanine biosynthesis</keyword>
<keyword id="KW-1185">Reference proteome</keyword>
<keyword id="KW-0732">Signal</keyword>
<sequence length="268" mass="30448">MPKSFRHLVQALACLALLASASLQAQESRLDRILESGVLRVATTGDYKPFSYRTEEGGYAGFDVDMAQRLAESLGAKLVVVPTSWPNLMRDFADDRFDIAMSGISINLERQRQAYFSIPYLRDGKTPITLCSEEARFQTLEQIDQPGVTAIVNPGGTNEKFARANLKKARILVHPDNVTIFQQIVDGKADLMMTDAIEARLQSRLHPELCAVHPQQPFDFAEKAYLLPRDEAFKRYVDQWLHIAEQSGLLRQRMEHWLEYRWPTAHGK</sequence>
<reference key="1">
    <citation type="journal article" date="1992" name="J. Biol. Chem.">
        <title>Cyclohexadienyl dehydratase from Pseudomonas aeruginosa. Molecular cloning of the gene and characterization of the gene product.</title>
        <authorList>
            <person name="Zhao G."/>
            <person name="Xia T.H."/>
            <person name="Fischer R.S."/>
            <person name="Jensen R.A."/>
        </authorList>
    </citation>
    <scope>NUCLEOTIDE SEQUENCE [GENOMIC DNA]</scope>
    <source>
        <strain>ATCC 15692 / DSM 22644 / CIP 104116 / JCM 14847 / LMG 12228 / 1C / PRS 101 / PAO1</strain>
    </source>
</reference>
<reference key="2">
    <citation type="journal article" date="2000" name="Nature">
        <title>Complete genome sequence of Pseudomonas aeruginosa PAO1, an opportunistic pathogen.</title>
        <authorList>
            <person name="Stover C.K."/>
            <person name="Pham X.-Q.T."/>
            <person name="Erwin A.L."/>
            <person name="Mizoguchi S.D."/>
            <person name="Warrener P."/>
            <person name="Hickey M.J."/>
            <person name="Brinkman F.S.L."/>
            <person name="Hufnagle W.O."/>
            <person name="Kowalik D.J."/>
            <person name="Lagrou M."/>
            <person name="Garber R.L."/>
            <person name="Goltry L."/>
            <person name="Tolentino E."/>
            <person name="Westbrock-Wadman S."/>
            <person name="Yuan Y."/>
            <person name="Brody L.L."/>
            <person name="Coulter S.N."/>
            <person name="Folger K.R."/>
            <person name="Kas A."/>
            <person name="Larbig K."/>
            <person name="Lim R.M."/>
            <person name="Smith K.A."/>
            <person name="Spencer D.H."/>
            <person name="Wong G.K.-S."/>
            <person name="Wu Z."/>
            <person name="Paulsen I.T."/>
            <person name="Reizer J."/>
            <person name="Saier M.H. Jr."/>
            <person name="Hancock R.E.W."/>
            <person name="Lory S."/>
            <person name="Olson M.V."/>
        </authorList>
    </citation>
    <scope>NUCLEOTIDE SEQUENCE [LARGE SCALE GENOMIC DNA]</scope>
    <source>
        <strain>ATCC 15692 / DSM 22644 / CIP 104116 / JCM 14847 / LMG 12228 / 1C / PRS 101 / PAO1</strain>
    </source>
</reference>
<reference key="3">
    <citation type="journal article" date="1993" name="J. Gen. Microbiol.">
        <title>Cyclohexadienyl dehydratase from Pseudomonas aeruginosa is a periplasmic protein.</title>
        <authorList>
            <person name="Zhao G."/>
            <person name="Xia T."/>
            <person name="Aldrich H."/>
            <person name="Jensen R.A."/>
        </authorList>
    </citation>
    <scope>PROTEIN SEQUENCE OF 26-36</scope>
    <scope>SUBCELLULAR LOCATION</scope>
</reference>
<reference key="4">
    <citation type="journal article" date="1995" name="Proc. Natl. Acad. Sci. U.S.A.">
        <title>Autoinducer-mediated regulation of rhamnolipid biosurfactant synthesis in Pseudomonas aeruginosa.</title>
        <authorList>
            <person name="Ochsner U.A."/>
            <person name="Reiser J."/>
        </authorList>
    </citation>
    <scope>NUCLEOTIDE SEQUENCE [GENOMIC DNA] OF 1-7</scope>
    <source>
        <strain>DSM 2659 / PG201</strain>
    </source>
</reference>
<accession>Q01269</accession>
<accession>Q9HYD3</accession>
<feature type="signal peptide" evidence="1">
    <location>
        <begin position="1"/>
        <end position="25"/>
    </location>
</feature>
<feature type="chain" id="PRO_0000031773" description="Cyclohexadienyl dehydratase">
    <location>
        <begin position="26"/>
        <end position="268"/>
    </location>
</feature>
<feature type="site" description="Important for catalysis">
    <location>
        <position position="179"/>
    </location>
</feature>
<feature type="sequence conflict" description="In Ref. 1; AAC08596." evidence="2" ref="1">
    <original>A</original>
    <variation>T</variation>
    <location>
        <position position="42"/>
    </location>
</feature>
<feature type="sequence conflict" description="In Ref. 1; AAC08596." evidence="2" ref="1">
    <original>Y</original>
    <variation>H</variation>
    <location>
        <position position="115"/>
    </location>
</feature>
<feature type="sequence conflict" description="In Ref. 1; AAC08596." evidence="2" ref="1">
    <original>DG</original>
    <variation>NS</variation>
    <location>
        <begin position="123"/>
        <end position="124"/>
    </location>
</feature>
<feature type="helix" evidence="3">
    <location>
        <begin position="29"/>
        <end position="36"/>
    </location>
</feature>
<feature type="strand" evidence="3">
    <location>
        <begin position="38"/>
        <end position="43"/>
    </location>
</feature>
<feature type="strand" evidence="3">
    <location>
        <begin position="45"/>
        <end position="47"/>
    </location>
</feature>
<feature type="turn" evidence="3">
    <location>
        <begin position="48"/>
        <end position="50"/>
    </location>
</feature>
<feature type="strand" evidence="3">
    <location>
        <begin position="51"/>
        <end position="53"/>
    </location>
</feature>
<feature type="strand" evidence="4">
    <location>
        <begin position="55"/>
        <end position="57"/>
    </location>
</feature>
<feature type="strand" evidence="3">
    <location>
        <begin position="59"/>
        <end position="61"/>
    </location>
</feature>
<feature type="helix" evidence="3">
    <location>
        <begin position="62"/>
        <end position="73"/>
    </location>
</feature>
<feature type="strand" evidence="3">
    <location>
        <begin position="77"/>
        <end position="82"/>
    </location>
</feature>
<feature type="turn" evidence="3">
    <location>
        <begin position="85"/>
        <end position="87"/>
    </location>
</feature>
<feature type="helix" evidence="3">
    <location>
        <begin position="88"/>
        <end position="93"/>
    </location>
</feature>
<feature type="strand" evidence="3">
    <location>
        <begin position="98"/>
        <end position="100"/>
    </location>
</feature>
<feature type="helix" evidence="3">
    <location>
        <begin position="108"/>
        <end position="111"/>
    </location>
</feature>
<feature type="strand" evidence="3">
    <location>
        <begin position="120"/>
        <end position="123"/>
    </location>
</feature>
<feature type="strand" evidence="3">
    <location>
        <begin position="125"/>
        <end position="130"/>
    </location>
</feature>
<feature type="helix" evidence="3">
    <location>
        <begin position="131"/>
        <end position="137"/>
    </location>
</feature>
<feature type="helix" evidence="3">
    <location>
        <begin position="140"/>
        <end position="143"/>
    </location>
</feature>
<feature type="strand" evidence="3">
    <location>
        <begin position="149"/>
        <end position="152"/>
    </location>
</feature>
<feature type="strand" evidence="4">
    <location>
        <begin position="154"/>
        <end position="156"/>
    </location>
</feature>
<feature type="helix" evidence="3">
    <location>
        <begin position="157"/>
        <end position="165"/>
    </location>
</feature>
<feature type="strand" evidence="3">
    <location>
        <begin position="167"/>
        <end position="173"/>
    </location>
</feature>
<feature type="turn" evidence="3">
    <location>
        <begin position="177"/>
        <end position="179"/>
    </location>
</feature>
<feature type="helix" evidence="3">
    <location>
        <begin position="180"/>
        <end position="185"/>
    </location>
</feature>
<feature type="strand" evidence="3">
    <location>
        <begin position="190"/>
        <end position="195"/>
    </location>
</feature>
<feature type="helix" evidence="3">
    <location>
        <begin position="196"/>
        <end position="205"/>
    </location>
</feature>
<feature type="strand" evidence="3">
    <location>
        <begin position="209"/>
        <end position="211"/>
    </location>
</feature>
<feature type="strand" evidence="3">
    <location>
        <begin position="221"/>
        <end position="223"/>
    </location>
</feature>
<feature type="helix" evidence="3">
    <location>
        <begin position="231"/>
        <end position="246"/>
    </location>
</feature>
<feature type="helix" evidence="3">
    <location>
        <begin position="249"/>
        <end position="257"/>
    </location>
</feature>
<proteinExistence type="evidence at protein level"/>
<dbReference type="EC" id="4.2.1.51"/>
<dbReference type="EC" id="4.2.1.91"/>
<dbReference type="EMBL" id="AF054868">
    <property type="protein sequence ID" value="AAC08596.1"/>
    <property type="molecule type" value="Genomic_DNA"/>
</dbReference>
<dbReference type="EMBL" id="AE004091">
    <property type="protein sequence ID" value="AAG06863.1"/>
    <property type="molecule type" value="Genomic_DNA"/>
</dbReference>
<dbReference type="PIR" id="B42325">
    <property type="entry name" value="B42325"/>
</dbReference>
<dbReference type="PIR" id="H83211">
    <property type="entry name" value="H83211"/>
</dbReference>
<dbReference type="RefSeq" id="NP_252165.1">
    <property type="nucleotide sequence ID" value="NC_002516.2"/>
</dbReference>
<dbReference type="RefSeq" id="WP_003092003.1">
    <property type="nucleotide sequence ID" value="NZ_QZGE01000039.1"/>
</dbReference>
<dbReference type="PDB" id="3KBR">
    <property type="method" value="X-ray"/>
    <property type="resolution" value="1.66 A"/>
    <property type="chains" value="A=26-261"/>
</dbReference>
<dbReference type="PDB" id="5HPQ">
    <property type="method" value="X-ray"/>
    <property type="resolution" value="2.05 A"/>
    <property type="chains" value="A=26-268"/>
</dbReference>
<dbReference type="PDBsum" id="3KBR"/>
<dbReference type="PDBsum" id="5HPQ"/>
<dbReference type="SMR" id="Q01269"/>
<dbReference type="STRING" id="208964.PA3475"/>
<dbReference type="PaxDb" id="208964-PA3475"/>
<dbReference type="DNASU" id="878976"/>
<dbReference type="GeneID" id="878976"/>
<dbReference type="KEGG" id="pae:PA3475"/>
<dbReference type="PATRIC" id="fig|208964.12.peg.3638"/>
<dbReference type="PseudoCAP" id="PA3475"/>
<dbReference type="HOGENOM" id="CLU_019602_9_0_6"/>
<dbReference type="InParanoid" id="Q01269"/>
<dbReference type="OrthoDB" id="7708309at2"/>
<dbReference type="PhylomeDB" id="Q01269"/>
<dbReference type="BioCyc" id="MetaCyc:MONOMER-17135"/>
<dbReference type="BioCyc" id="PAER208964:G1FZ6-3543-MONOMER"/>
<dbReference type="BRENDA" id="4.2.1.91">
    <property type="organism ID" value="5087"/>
</dbReference>
<dbReference type="SABIO-RK" id="Q01269"/>
<dbReference type="UniPathway" id="UPA00121">
    <property type="reaction ID" value="UER00344"/>
</dbReference>
<dbReference type="UniPathway" id="UPA00121">
    <property type="reaction ID" value="UER00345"/>
</dbReference>
<dbReference type="EvolutionaryTrace" id="Q01269"/>
<dbReference type="Proteomes" id="UP000002438">
    <property type="component" value="Chromosome"/>
</dbReference>
<dbReference type="GO" id="GO:0042597">
    <property type="term" value="C:periplasmic space"/>
    <property type="evidence" value="ECO:0007669"/>
    <property type="project" value="UniProtKB-SubCell"/>
</dbReference>
<dbReference type="GO" id="GO:0047769">
    <property type="term" value="F:arogenate dehydratase activity"/>
    <property type="evidence" value="ECO:0007669"/>
    <property type="project" value="UniProtKB-EC"/>
</dbReference>
<dbReference type="GO" id="GO:0004664">
    <property type="term" value="F:prephenate dehydratase activity"/>
    <property type="evidence" value="ECO:0007669"/>
    <property type="project" value="UniProtKB-EC"/>
</dbReference>
<dbReference type="GO" id="GO:0009094">
    <property type="term" value="P:L-phenylalanine biosynthetic process"/>
    <property type="evidence" value="ECO:0007669"/>
    <property type="project" value="UniProtKB-UniPathway"/>
</dbReference>
<dbReference type="CDD" id="cd01069">
    <property type="entry name" value="PBP2_PheC"/>
    <property type="match status" value="1"/>
</dbReference>
<dbReference type="Gene3D" id="3.40.190.10">
    <property type="entry name" value="Periplasmic binding protein-like II"/>
    <property type="match status" value="2"/>
</dbReference>
<dbReference type="InterPro" id="IPR037298">
    <property type="entry name" value="PheC_PBP2"/>
</dbReference>
<dbReference type="InterPro" id="IPR018313">
    <property type="entry name" value="SBP_3_CS"/>
</dbReference>
<dbReference type="InterPro" id="IPR001638">
    <property type="entry name" value="Solute-binding_3/MltF_N"/>
</dbReference>
<dbReference type="PANTHER" id="PTHR35936:SF19">
    <property type="entry name" value="AMINO-ACID-BINDING PROTEIN YXEM-RELATED"/>
    <property type="match status" value="1"/>
</dbReference>
<dbReference type="PANTHER" id="PTHR35936">
    <property type="entry name" value="MEMBRANE-BOUND LYTIC MUREIN TRANSGLYCOSYLASE F"/>
    <property type="match status" value="1"/>
</dbReference>
<dbReference type="Pfam" id="PF00497">
    <property type="entry name" value="SBP_bac_3"/>
    <property type="match status" value="1"/>
</dbReference>
<dbReference type="SMART" id="SM00062">
    <property type="entry name" value="PBPb"/>
    <property type="match status" value="1"/>
</dbReference>
<dbReference type="SUPFAM" id="SSF53850">
    <property type="entry name" value="Periplasmic binding protein-like II"/>
    <property type="match status" value="1"/>
</dbReference>
<dbReference type="PROSITE" id="PS01039">
    <property type="entry name" value="SBP_BACTERIAL_3"/>
    <property type="match status" value="1"/>
</dbReference>